<gene>
    <name evidence="3" type="primary">ccmL</name>
    <name type="ordered locus">all0866</name>
</gene>
<feature type="chain" id="PRO_0000451290" description="Carboxysome shell vertex protein CcmL">
    <location>
        <begin position="1"/>
        <end position="101"/>
    </location>
</feature>
<feature type="domain" description="BMV" evidence="3">
    <location>
        <begin position="1"/>
        <end position="84"/>
    </location>
</feature>
<feature type="mutagenesis site" description="No change in oligomerization." evidence="4">
    <original>Q</original>
    <variation>A</variation>
    <location>
        <position position="38"/>
    </location>
</feature>
<feature type="strand" evidence="7">
    <location>
        <begin position="2"/>
        <end position="11"/>
    </location>
</feature>
<feature type="strand" evidence="7">
    <location>
        <begin position="13"/>
        <end position="15"/>
    </location>
</feature>
<feature type="helix" evidence="7">
    <location>
        <begin position="17"/>
        <end position="19"/>
    </location>
</feature>
<feature type="strand" evidence="7">
    <location>
        <begin position="24"/>
        <end position="30"/>
    </location>
</feature>
<feature type="strand" evidence="7">
    <location>
        <begin position="36"/>
        <end position="44"/>
    </location>
</feature>
<feature type="strand" evidence="7">
    <location>
        <begin position="46"/>
        <end position="48"/>
    </location>
</feature>
<feature type="strand" evidence="7">
    <location>
        <begin position="55"/>
        <end position="60"/>
    </location>
</feature>
<feature type="helix" evidence="7">
    <location>
        <begin position="61"/>
        <end position="66"/>
    </location>
</feature>
<feature type="strand" evidence="7">
    <location>
        <begin position="76"/>
        <end position="88"/>
    </location>
</feature>
<feature type="strand" evidence="7">
    <location>
        <begin position="91"/>
        <end position="95"/>
    </location>
</feature>
<feature type="turn" evidence="7">
    <location>
        <begin position="96"/>
        <end position="98"/>
    </location>
</feature>
<keyword id="KW-0002">3D-structure</keyword>
<keyword id="KW-1283">Bacterial microcompartment</keyword>
<keyword id="KW-0120">Carbon dioxide fixation</keyword>
<keyword id="KW-1282">Carboxysome</keyword>
<keyword id="KW-0602">Photosynthesis</keyword>
<keyword id="KW-1185">Reference proteome</keyword>
<sequence>MQIAKVRGTVVSTQKDPSLRGVKLLLLQLVDEEGNLLQKYEVAADNSVGAGFDEWVLISRGSAARQLLGNEQRPVDAAVVAIIDTIHVEDRLIYSKKDQYR</sequence>
<comment type="function">
    <text evidence="1 3">Probably forms vertices in the carboxysome, a polyhedral inclusion where RuBisCO (ribulose bisphosphate carboxylase, rbcL-rbcS) is sequestered. Has been modeled to induce curvature upon insertion into an otherwise flat hexagonal molecular layer of CcmK subunits.</text>
</comment>
<comment type="subunit">
    <text evidence="1 4">Homopentamer (PubMed:24504539). Interacts with full-length CcmM (By similarity).</text>
</comment>
<comment type="subcellular location">
    <subcellularLocation>
        <location evidence="2 3">Carboxysome</location>
    </subcellularLocation>
    <text evidence="5">This cyanobacterium makes beta-type carboxysomes. Probably forms vertices in the carboxysome.</text>
</comment>
<comment type="domain">
    <text evidence="4">The tight homopentamer forms a pore with an opening of about 5 Angstroms in diameter which opens into a wider tunnel at the base of the truncated pyramid. The pore is positively charged.</text>
</comment>
<comment type="similarity">
    <text evidence="3">Belongs to the CcmL/EutN family. CcmL subfamily.</text>
</comment>
<accession>Q8YYI2</accession>
<name>CCML_NOSS1</name>
<evidence type="ECO:0000250" key="1">
    <source>
        <dbReference type="UniProtKB" id="P72759"/>
    </source>
</evidence>
<evidence type="ECO:0000250" key="2">
    <source>
        <dbReference type="UniProtKB" id="Q03512"/>
    </source>
</evidence>
<evidence type="ECO:0000255" key="3">
    <source>
        <dbReference type="HAMAP-Rule" id="MF_00858"/>
    </source>
</evidence>
<evidence type="ECO:0000269" key="4">
    <source>
    </source>
</evidence>
<evidence type="ECO:0000305" key="5">
    <source>
    </source>
</evidence>
<evidence type="ECO:0007744" key="6">
    <source>
        <dbReference type="PDB" id="4N8X"/>
    </source>
</evidence>
<evidence type="ECO:0007829" key="7">
    <source>
        <dbReference type="PDB" id="4N8X"/>
    </source>
</evidence>
<proteinExistence type="evidence at protein level"/>
<protein>
    <recommendedName>
        <fullName evidence="3">Carboxysome shell vertex protein CcmL</fullName>
    </recommendedName>
    <alternativeName>
        <fullName evidence="3">Carbon dioxide concentrating mechanism protein CcmL</fullName>
    </alternativeName>
</protein>
<dbReference type="EMBL" id="BA000019">
    <property type="protein sequence ID" value="BAB72823.1"/>
    <property type="molecule type" value="Genomic_DNA"/>
</dbReference>
<dbReference type="PIR" id="AH1914">
    <property type="entry name" value="AH1914"/>
</dbReference>
<dbReference type="RefSeq" id="WP_010995040.1">
    <property type="nucleotide sequence ID" value="NZ_RSCN01000006.1"/>
</dbReference>
<dbReference type="PDB" id="4N8X">
    <property type="method" value="X-ray"/>
    <property type="resolution" value="1.93 A"/>
    <property type="chains" value="1/2/3/4/A/B/C/D/E/F/G/H/I/J/K/L/M/N/O/P/Q/R/S/T/U/V/W/X/Y/Z=1-101"/>
</dbReference>
<dbReference type="PDBsum" id="4N8X"/>
<dbReference type="SMR" id="Q8YYI2"/>
<dbReference type="STRING" id="103690.gene:10492879"/>
<dbReference type="KEGG" id="ana:all0866"/>
<dbReference type="eggNOG" id="COG4576">
    <property type="taxonomic scope" value="Bacteria"/>
</dbReference>
<dbReference type="OrthoDB" id="196195at2"/>
<dbReference type="Proteomes" id="UP000002483">
    <property type="component" value="Chromosome"/>
</dbReference>
<dbReference type="GO" id="GO:0031470">
    <property type="term" value="C:carboxysome"/>
    <property type="evidence" value="ECO:0007669"/>
    <property type="project" value="UniProtKB-SubCell"/>
</dbReference>
<dbReference type="GO" id="GO:0043886">
    <property type="term" value="F:structural constituent of carboxysome shell"/>
    <property type="evidence" value="ECO:0007669"/>
    <property type="project" value="UniProtKB-UniRule"/>
</dbReference>
<dbReference type="GO" id="GO:0015977">
    <property type="term" value="P:carbon fixation"/>
    <property type="evidence" value="ECO:0007669"/>
    <property type="project" value="UniProtKB-UniRule"/>
</dbReference>
<dbReference type="GO" id="GO:0015979">
    <property type="term" value="P:photosynthesis"/>
    <property type="evidence" value="ECO:0007669"/>
    <property type="project" value="UniProtKB-KW"/>
</dbReference>
<dbReference type="CDD" id="cd01614">
    <property type="entry name" value="EutN_CcmL"/>
    <property type="match status" value="1"/>
</dbReference>
<dbReference type="Gene3D" id="2.40.50.220">
    <property type="entry name" value="EutN/Ccml"/>
    <property type="match status" value="1"/>
</dbReference>
<dbReference type="HAMAP" id="MF_00858">
    <property type="entry name" value="CcmL"/>
    <property type="match status" value="1"/>
</dbReference>
<dbReference type="InterPro" id="IPR046387">
    <property type="entry name" value="CcmL"/>
</dbReference>
<dbReference type="InterPro" id="IPR004992">
    <property type="entry name" value="EutN_CcmL"/>
</dbReference>
<dbReference type="InterPro" id="IPR036677">
    <property type="entry name" value="EutN_CcmL_sf"/>
</dbReference>
<dbReference type="PANTHER" id="PTHR36539:SF1">
    <property type="entry name" value="BACTERIAL MICROCOMPARTMENT SHELL VERTEX PROTEIN EUTN"/>
    <property type="match status" value="1"/>
</dbReference>
<dbReference type="PANTHER" id="PTHR36539">
    <property type="entry name" value="ETHANOLAMINE UTILIZATION PROTEIN EUTN"/>
    <property type="match status" value="1"/>
</dbReference>
<dbReference type="Pfam" id="PF03319">
    <property type="entry name" value="EutN_CcmL"/>
    <property type="match status" value="1"/>
</dbReference>
<dbReference type="SUPFAM" id="SSF159133">
    <property type="entry name" value="EutN/CcmL-like"/>
    <property type="match status" value="1"/>
</dbReference>
<dbReference type="PROSITE" id="PS51932">
    <property type="entry name" value="BMV"/>
    <property type="match status" value="1"/>
</dbReference>
<organism>
    <name type="scientific">Nostoc sp. (strain PCC 7120 / SAG 25.82 / UTEX 2576)</name>
    <dbReference type="NCBI Taxonomy" id="103690"/>
    <lineage>
        <taxon>Bacteria</taxon>
        <taxon>Bacillati</taxon>
        <taxon>Cyanobacteriota</taxon>
        <taxon>Cyanophyceae</taxon>
        <taxon>Nostocales</taxon>
        <taxon>Nostocaceae</taxon>
        <taxon>Nostoc</taxon>
    </lineage>
</organism>
<reference key="1">
    <citation type="journal article" date="2001" name="DNA Res.">
        <title>Complete genomic sequence of the filamentous nitrogen-fixing cyanobacterium Anabaena sp. strain PCC 7120.</title>
        <authorList>
            <person name="Kaneko T."/>
            <person name="Nakamura Y."/>
            <person name="Wolk C.P."/>
            <person name="Kuritz T."/>
            <person name="Sasamoto S."/>
            <person name="Watanabe A."/>
            <person name="Iriguchi M."/>
            <person name="Ishikawa A."/>
            <person name="Kawashima K."/>
            <person name="Kimura T."/>
            <person name="Kishida Y."/>
            <person name="Kohara M."/>
            <person name="Matsumoto M."/>
            <person name="Matsuno A."/>
            <person name="Muraki A."/>
            <person name="Nakazaki N."/>
            <person name="Shimpo S."/>
            <person name="Sugimoto M."/>
            <person name="Takazawa M."/>
            <person name="Yamada M."/>
            <person name="Yasuda M."/>
            <person name="Tabata S."/>
        </authorList>
    </citation>
    <scope>NUCLEOTIDE SEQUENCE [LARGE SCALE GENOMIC DNA]</scope>
    <source>
        <strain>PCC 7120 / SAG 25.82 / UTEX 2576</strain>
    </source>
</reference>
<reference evidence="6" key="2">
    <citation type="journal article" date="2014" name="Photosyn. Res.">
        <title>Interactions and structural variability of beta-carboxysomal shell protein CcmL.</title>
        <authorList>
            <person name="Keeling T.J."/>
            <person name="Samborska B."/>
            <person name="Demers R.W."/>
            <person name="Kimber M.S."/>
        </authorList>
    </citation>
    <scope>X-RAY CRYSTALLOGRAPHY (1.93 ANGSTROMS)</scope>
    <scope>SUBUNIT</scope>
    <scope>DOMAIN</scope>
    <scope>MUTAGENESIS OF GLN-38</scope>
    <source>
        <strain>PCC 7120 / SAG 25.82 / UTEX 2576</strain>
    </source>
</reference>